<organism>
    <name type="scientific">Schizorhiza neglecta</name>
    <name type="common">Lapeirousia neglecta</name>
    <dbReference type="NCBI Taxonomy" id="58958"/>
    <lineage>
        <taxon>Eukaryota</taxon>
        <taxon>Viridiplantae</taxon>
        <taxon>Streptophyta</taxon>
        <taxon>Embryophyta</taxon>
        <taxon>Tracheophyta</taxon>
        <taxon>Spermatophyta</taxon>
        <taxon>Magnoliopsida</taxon>
        <taxon>Liliopsida</taxon>
        <taxon>Asparagales</taxon>
        <taxon>Iridaceae</taxon>
        <taxon>Crocoideae</taxon>
        <taxon>Watsonieae</taxon>
        <taxon>Schizorhiza</taxon>
    </lineage>
</organism>
<proteinExistence type="inferred from homology"/>
<name>MATK_SCHNE</name>
<dbReference type="EMBL" id="AJ579967">
    <property type="protein sequence ID" value="CAE45240.1"/>
    <property type="molecule type" value="Genomic_DNA"/>
</dbReference>
<dbReference type="GO" id="GO:0009507">
    <property type="term" value="C:chloroplast"/>
    <property type="evidence" value="ECO:0007669"/>
    <property type="project" value="UniProtKB-SubCell"/>
</dbReference>
<dbReference type="GO" id="GO:0003723">
    <property type="term" value="F:RNA binding"/>
    <property type="evidence" value="ECO:0007669"/>
    <property type="project" value="UniProtKB-KW"/>
</dbReference>
<dbReference type="GO" id="GO:0006397">
    <property type="term" value="P:mRNA processing"/>
    <property type="evidence" value="ECO:0007669"/>
    <property type="project" value="UniProtKB-KW"/>
</dbReference>
<dbReference type="GO" id="GO:0008380">
    <property type="term" value="P:RNA splicing"/>
    <property type="evidence" value="ECO:0007669"/>
    <property type="project" value="UniProtKB-UniRule"/>
</dbReference>
<dbReference type="GO" id="GO:0008033">
    <property type="term" value="P:tRNA processing"/>
    <property type="evidence" value="ECO:0007669"/>
    <property type="project" value="UniProtKB-KW"/>
</dbReference>
<dbReference type="HAMAP" id="MF_01390">
    <property type="entry name" value="MatK"/>
    <property type="match status" value="1"/>
</dbReference>
<dbReference type="InterPro" id="IPR024937">
    <property type="entry name" value="Domain_X"/>
</dbReference>
<dbReference type="InterPro" id="IPR002866">
    <property type="entry name" value="Maturase_MatK"/>
</dbReference>
<dbReference type="InterPro" id="IPR024942">
    <property type="entry name" value="Maturase_MatK_N"/>
</dbReference>
<dbReference type="PANTHER" id="PTHR34811">
    <property type="entry name" value="MATURASE K"/>
    <property type="match status" value="1"/>
</dbReference>
<dbReference type="PANTHER" id="PTHR34811:SF1">
    <property type="entry name" value="MATURASE K"/>
    <property type="match status" value="1"/>
</dbReference>
<dbReference type="Pfam" id="PF01348">
    <property type="entry name" value="Intron_maturas2"/>
    <property type="match status" value="1"/>
</dbReference>
<dbReference type="Pfam" id="PF01824">
    <property type="entry name" value="MatK_N"/>
    <property type="match status" value="1"/>
</dbReference>
<gene>
    <name evidence="1" type="primary">matK</name>
</gene>
<evidence type="ECO:0000255" key="1">
    <source>
        <dbReference type="HAMAP-Rule" id="MF_01390"/>
    </source>
</evidence>
<keyword id="KW-0150">Chloroplast</keyword>
<keyword id="KW-0507">mRNA processing</keyword>
<keyword id="KW-0934">Plastid</keyword>
<keyword id="KW-0694">RNA-binding</keyword>
<keyword id="KW-0819">tRNA processing</keyword>
<protein>
    <recommendedName>
        <fullName evidence="1">Maturase K</fullName>
    </recommendedName>
    <alternativeName>
        <fullName evidence="1">Intron maturase</fullName>
    </alternativeName>
</protein>
<sequence length="522" mass="62683">MEELQGYFEKDRSRQQPFLYPLLFQEYIYALAHDRGLNRNGSIFYEPLEVFGYDSKSSLALVKRLITRIYQQHFFLSSVNDSNQNRFVGHHHTNFFYSRFYSQMISEGFAIIVEIPFSLQLVSPLKEKEIPKSHNLRSIHFNFPFLEDQLLHFNYVSDILIPHPIHMEILVQILQCWIQDVPLLHFLRFFLHEYHNWHSFFITQNKSIYLFSKETKRLFRFLYNSYVSECEFVFVFLRKHSSYLRFTSFRTFLERRYFYGKMEHLQTEHLIIVCCDYFNRTLWSFKDPFMHYARCQGKAILVSKGTHLLMKKWKYNFVNLWQYYFHFWYQSYRIHINQLSNHSFYFLGYLSSLLKNSSTVRNQMLDNSFLIDTLTTKFDTAVPVIFLIVSLSKAQFCTVSGHPISKPIWTDLSDSGIIERFGRICRNLSHYHSGSSKKQGLYRIKYILRLSCARTLARKHKSTVRTFMQRLGSRLLEEFFTEGEQDLSLILPKAIPFPFSGSHRERIWYLDIIRINDLVNRS</sequence>
<reference key="1">
    <citation type="submission" date="2005-07" db="EMBL/GenBank/DDBJ databases">
        <title>Environmental energy and species richness in flowering plants.</title>
        <authorList>
            <person name="Davies T.J."/>
        </authorList>
    </citation>
    <scope>NUCLEOTIDE SEQUENCE [GENOMIC DNA]</scope>
</reference>
<accession>Q4H195</accession>
<comment type="function">
    <text evidence="1">Usually encoded in the trnK tRNA gene intron. Probably assists in splicing its own and other chloroplast group II introns.</text>
</comment>
<comment type="subcellular location">
    <subcellularLocation>
        <location>Plastid</location>
        <location>Chloroplast</location>
    </subcellularLocation>
</comment>
<comment type="similarity">
    <text evidence="1">Belongs to the intron maturase 2 family. MatK subfamily.</text>
</comment>
<feature type="chain" id="PRO_0000143455" description="Maturase K">
    <location>
        <begin position="1"/>
        <end position="522"/>
    </location>
</feature>
<geneLocation type="chloroplast"/>